<keyword id="KW-0028">Amino-acid biosynthesis</keyword>
<keyword id="KW-0220">Diaminopimelate biosynthesis</keyword>
<keyword id="KW-0457">Lysine biosynthesis</keyword>
<keyword id="KW-0486">Methionine biosynthesis</keyword>
<keyword id="KW-0521">NADP</keyword>
<keyword id="KW-0560">Oxidoreductase</keyword>
<keyword id="KW-0791">Threonine biosynthesis</keyword>
<organism>
    <name type="scientific">Azotobacter vinelandii</name>
    <dbReference type="NCBI Taxonomy" id="354"/>
    <lineage>
        <taxon>Bacteria</taxon>
        <taxon>Pseudomonadati</taxon>
        <taxon>Pseudomonadota</taxon>
        <taxon>Gammaproteobacteria</taxon>
        <taxon>Pseudomonadales</taxon>
        <taxon>Pseudomonadaceae</taxon>
        <taxon>Azotobacter</taxon>
    </lineage>
</organism>
<accession>P96198</accession>
<name>DHAS_AZOVI</name>
<feature type="chain" id="PRO_0000141360" description="Aspartate-semialdehyde dehydrogenase">
    <location>
        <begin position="1"/>
        <end position="368"/>
    </location>
</feature>
<feature type="active site" description="Acyl-thioester intermediate" evidence="1">
    <location>
        <position position="134"/>
    </location>
</feature>
<feature type="active site" description="Proton acceptor" evidence="1">
    <location>
        <position position="273"/>
    </location>
</feature>
<feature type="binding site" evidence="1">
    <location>
        <begin position="10"/>
        <end position="13"/>
    </location>
    <ligand>
        <name>NADP(+)</name>
        <dbReference type="ChEBI" id="CHEBI:58349"/>
    </ligand>
</feature>
<feature type="binding site" evidence="1">
    <location>
        <begin position="37"/>
        <end position="38"/>
    </location>
    <ligand>
        <name>NADP(+)</name>
        <dbReference type="ChEBI" id="CHEBI:58349"/>
    </ligand>
</feature>
<feature type="binding site" evidence="1">
    <location>
        <position position="72"/>
    </location>
    <ligand>
        <name>NADP(+)</name>
        <dbReference type="ChEBI" id="CHEBI:58349"/>
    </ligand>
</feature>
<feature type="binding site" evidence="1">
    <location>
        <position position="101"/>
    </location>
    <ligand>
        <name>phosphate</name>
        <dbReference type="ChEBI" id="CHEBI:43474"/>
    </ligand>
</feature>
<feature type="binding site" evidence="1">
    <location>
        <begin position="160"/>
        <end position="161"/>
    </location>
    <ligand>
        <name>NADP(+)</name>
        <dbReference type="ChEBI" id="CHEBI:58349"/>
    </ligand>
</feature>
<feature type="binding site" evidence="1">
    <location>
        <position position="191"/>
    </location>
    <ligand>
        <name>NADP(+)</name>
        <dbReference type="ChEBI" id="CHEBI:58349"/>
    </ligand>
</feature>
<feature type="binding site" evidence="1">
    <location>
        <position position="239"/>
    </location>
    <ligand>
        <name>substrate</name>
    </ligand>
</feature>
<feature type="binding site" evidence="1">
    <location>
        <position position="242"/>
    </location>
    <ligand>
        <name>phosphate</name>
        <dbReference type="ChEBI" id="CHEBI:43474"/>
    </ligand>
</feature>
<feature type="binding site" evidence="1">
    <location>
        <position position="266"/>
    </location>
    <ligand>
        <name>substrate</name>
    </ligand>
</feature>
<feature type="binding site" evidence="1">
    <location>
        <position position="349"/>
    </location>
    <ligand>
        <name>NADP(+)</name>
        <dbReference type="ChEBI" id="CHEBI:58349"/>
    </ligand>
</feature>
<proteinExistence type="inferred from homology"/>
<dbReference type="EC" id="1.2.1.11" evidence="1"/>
<dbReference type="EMBL" id="Y11280">
    <property type="protein sequence ID" value="CAA72152.1"/>
    <property type="molecule type" value="Genomic_DNA"/>
</dbReference>
<dbReference type="SMR" id="P96198"/>
<dbReference type="UniPathway" id="UPA00034">
    <property type="reaction ID" value="UER00016"/>
</dbReference>
<dbReference type="UniPathway" id="UPA00050">
    <property type="reaction ID" value="UER00463"/>
</dbReference>
<dbReference type="UniPathway" id="UPA00051">
    <property type="reaction ID" value="UER00464"/>
</dbReference>
<dbReference type="GO" id="GO:0004073">
    <property type="term" value="F:aspartate-semialdehyde dehydrogenase activity"/>
    <property type="evidence" value="ECO:0007669"/>
    <property type="project" value="UniProtKB-UniRule"/>
</dbReference>
<dbReference type="GO" id="GO:0051287">
    <property type="term" value="F:NAD binding"/>
    <property type="evidence" value="ECO:0007669"/>
    <property type="project" value="InterPro"/>
</dbReference>
<dbReference type="GO" id="GO:0050661">
    <property type="term" value="F:NADP binding"/>
    <property type="evidence" value="ECO:0007669"/>
    <property type="project" value="UniProtKB-UniRule"/>
</dbReference>
<dbReference type="GO" id="GO:0046983">
    <property type="term" value="F:protein dimerization activity"/>
    <property type="evidence" value="ECO:0007669"/>
    <property type="project" value="InterPro"/>
</dbReference>
<dbReference type="GO" id="GO:0071266">
    <property type="term" value="P:'de novo' L-methionine biosynthetic process"/>
    <property type="evidence" value="ECO:0007669"/>
    <property type="project" value="UniProtKB-UniRule"/>
</dbReference>
<dbReference type="GO" id="GO:0019877">
    <property type="term" value="P:diaminopimelate biosynthetic process"/>
    <property type="evidence" value="ECO:0007669"/>
    <property type="project" value="UniProtKB-UniRule"/>
</dbReference>
<dbReference type="GO" id="GO:0009097">
    <property type="term" value="P:isoleucine biosynthetic process"/>
    <property type="evidence" value="ECO:0007669"/>
    <property type="project" value="InterPro"/>
</dbReference>
<dbReference type="GO" id="GO:0009089">
    <property type="term" value="P:lysine biosynthetic process via diaminopimelate"/>
    <property type="evidence" value="ECO:0007669"/>
    <property type="project" value="UniProtKB-UniRule"/>
</dbReference>
<dbReference type="GO" id="GO:0009088">
    <property type="term" value="P:threonine biosynthetic process"/>
    <property type="evidence" value="ECO:0007669"/>
    <property type="project" value="UniProtKB-UniRule"/>
</dbReference>
<dbReference type="CDD" id="cd23938">
    <property type="entry name" value="ASADH_C_bac_like"/>
    <property type="match status" value="1"/>
</dbReference>
<dbReference type="CDD" id="cd02314">
    <property type="entry name" value="VcASADH1_like_N"/>
    <property type="match status" value="1"/>
</dbReference>
<dbReference type="Gene3D" id="3.30.360.10">
    <property type="entry name" value="Dihydrodipicolinate Reductase, domain 2"/>
    <property type="match status" value="1"/>
</dbReference>
<dbReference type="Gene3D" id="3.40.50.720">
    <property type="entry name" value="NAD(P)-binding Rossmann-like Domain"/>
    <property type="match status" value="1"/>
</dbReference>
<dbReference type="HAMAP" id="MF_02121">
    <property type="entry name" value="ASADH"/>
    <property type="match status" value="1"/>
</dbReference>
<dbReference type="InterPro" id="IPR000319">
    <property type="entry name" value="Asp-semialdehyde_DH_CS"/>
</dbReference>
<dbReference type="InterPro" id="IPR011534">
    <property type="entry name" value="Asp_ADH_gamma-type"/>
</dbReference>
<dbReference type="InterPro" id="IPR012080">
    <property type="entry name" value="Asp_semialdehyde_DH"/>
</dbReference>
<dbReference type="InterPro" id="IPR036291">
    <property type="entry name" value="NAD(P)-bd_dom_sf"/>
</dbReference>
<dbReference type="InterPro" id="IPR000534">
    <property type="entry name" value="Semialdehyde_DH_NAD-bd"/>
</dbReference>
<dbReference type="InterPro" id="IPR012280">
    <property type="entry name" value="Semialdhyde_DH_dimer_dom"/>
</dbReference>
<dbReference type="NCBIfam" id="TIGR01745">
    <property type="entry name" value="asd_gamma"/>
    <property type="match status" value="1"/>
</dbReference>
<dbReference type="NCBIfam" id="NF005144">
    <property type="entry name" value="PRK06598.1"/>
    <property type="match status" value="1"/>
</dbReference>
<dbReference type="PANTHER" id="PTHR46278:SF4">
    <property type="entry name" value="ASPARTATE-SEMIALDEHYDE DEHYDROGENASE"/>
    <property type="match status" value="1"/>
</dbReference>
<dbReference type="PANTHER" id="PTHR46278">
    <property type="entry name" value="DEHYDROGENASE, PUTATIVE-RELATED"/>
    <property type="match status" value="1"/>
</dbReference>
<dbReference type="Pfam" id="PF01118">
    <property type="entry name" value="Semialdhyde_dh"/>
    <property type="match status" value="1"/>
</dbReference>
<dbReference type="Pfam" id="PF02774">
    <property type="entry name" value="Semialdhyde_dhC"/>
    <property type="match status" value="1"/>
</dbReference>
<dbReference type="PIRSF" id="PIRSF000148">
    <property type="entry name" value="ASA_dh"/>
    <property type="match status" value="1"/>
</dbReference>
<dbReference type="SMART" id="SM00859">
    <property type="entry name" value="Semialdhyde_dh"/>
    <property type="match status" value="1"/>
</dbReference>
<dbReference type="SUPFAM" id="SSF55347">
    <property type="entry name" value="Glyceraldehyde-3-phosphate dehydrogenase-like, C-terminal domain"/>
    <property type="match status" value="1"/>
</dbReference>
<dbReference type="SUPFAM" id="SSF51735">
    <property type="entry name" value="NAD(P)-binding Rossmann-fold domains"/>
    <property type="match status" value="1"/>
</dbReference>
<dbReference type="PROSITE" id="PS01103">
    <property type="entry name" value="ASD"/>
    <property type="match status" value="1"/>
</dbReference>
<protein>
    <recommendedName>
        <fullName evidence="1">Aspartate-semialdehyde dehydrogenase</fullName>
        <shortName evidence="1">ASA dehydrogenase</shortName>
        <shortName evidence="1">ASADH</shortName>
        <ecNumber evidence="1">1.2.1.11</ecNumber>
    </recommendedName>
    <alternativeName>
        <fullName evidence="1">Aspartate-beta-semialdehyde dehydrogenase</fullName>
    </alternativeName>
</protein>
<comment type="function">
    <text evidence="1">Catalyzes the NADPH-dependent formation of L-aspartate-semialdehyde (L-ASA) by the reductive dephosphorylation of L-aspartyl-4-phosphate.</text>
</comment>
<comment type="catalytic activity">
    <reaction evidence="1">
        <text>L-aspartate 4-semialdehyde + phosphate + NADP(+) = 4-phospho-L-aspartate + NADPH + H(+)</text>
        <dbReference type="Rhea" id="RHEA:24284"/>
        <dbReference type="ChEBI" id="CHEBI:15378"/>
        <dbReference type="ChEBI" id="CHEBI:43474"/>
        <dbReference type="ChEBI" id="CHEBI:57535"/>
        <dbReference type="ChEBI" id="CHEBI:57783"/>
        <dbReference type="ChEBI" id="CHEBI:58349"/>
        <dbReference type="ChEBI" id="CHEBI:537519"/>
        <dbReference type="EC" id="1.2.1.11"/>
    </reaction>
</comment>
<comment type="pathway">
    <text evidence="1">Amino-acid biosynthesis; L-lysine biosynthesis via DAP pathway; (S)-tetrahydrodipicolinate from L-aspartate: step 2/4.</text>
</comment>
<comment type="pathway">
    <text evidence="1">Amino-acid biosynthesis; L-methionine biosynthesis via de novo pathway; L-homoserine from L-aspartate: step 2/3.</text>
</comment>
<comment type="pathway">
    <text evidence="1">Amino-acid biosynthesis; L-threonine biosynthesis; L-threonine from L-aspartate: step 2/5.</text>
</comment>
<comment type="subunit">
    <text evidence="1">Homodimer.</text>
</comment>
<comment type="similarity">
    <text evidence="1">Belongs to the aspartate-semialdehyde dehydrogenase family.</text>
</comment>
<evidence type="ECO:0000255" key="1">
    <source>
        <dbReference type="HAMAP-Rule" id="MF_02121"/>
    </source>
</evidence>
<reference key="1">
    <citation type="journal article" date="1997" name="Mol. Gen. Genet.">
        <title>Characterization and mutagenesis of the leucine biosynthetic genes of Azotobacter vinelandii: an analysis of the rarity of amino acid auxotrophs.</title>
        <authorList>
            <person name="Manna A.C."/>
            <person name="Das H.K."/>
        </authorList>
    </citation>
    <scope>NUCLEOTIDE SEQUENCE [GENOMIC DNA]</scope>
    <source>
        <strain>ATCC 13705 / OP1 / DSM 366 / NCIMB 11614 / LMG 3878 / UW</strain>
    </source>
</reference>
<gene>
    <name evidence="1" type="primary">asd</name>
</gene>
<sequence length="368" mass="40388">MKRVGLIGWRGMVGSVLMQRMLEERDFDLIEPVFFTTSSVGGQGAIGKETVPLKDAYSIEELKSLDAIITCQGGDYTSEVFPKLRDAGWQGYWIDAASSLRMADDAVIVLDPVNRRVIDQSLDAGVKNYIGGNCTVSLMLMALGRLRGRPGRLDERHDLSGRFRAGAQNMRELIRQMGTINAAVAAEPADPASAILEIDRKGPETQRSAEFPVDHFGVPLAGSLIPYIDKELPNGQSREEWKGQAETNKILGRIKNPIPVDGICVRVGAMRCHSQALTIKLNKDVPIADIEGLISQHNPWVKLVPNHREASMQELSPAAITGTLTVPVGRLRKLNMGSQYLGAFTVGDQLLWGAAEPVRRMLLILLER</sequence>